<protein>
    <recommendedName>
        <fullName evidence="1">Large ribosomal subunit protein uL2</fullName>
    </recommendedName>
    <alternativeName>
        <fullName evidence="3">50S ribosomal protein L2</fullName>
    </alternativeName>
</protein>
<organism>
    <name type="scientific">Geotalea daltonii (strain DSM 22248 / JCM 15807 / FRC-32)</name>
    <name type="common">Geobacter daltonii</name>
    <dbReference type="NCBI Taxonomy" id="316067"/>
    <lineage>
        <taxon>Bacteria</taxon>
        <taxon>Pseudomonadati</taxon>
        <taxon>Thermodesulfobacteriota</taxon>
        <taxon>Desulfuromonadia</taxon>
        <taxon>Geobacterales</taxon>
        <taxon>Geobacteraceae</taxon>
        <taxon>Geotalea</taxon>
    </lineage>
</organism>
<feature type="chain" id="PRO_1000165750" description="Large ribosomal subunit protein uL2">
    <location>
        <begin position="1"/>
        <end position="274"/>
    </location>
</feature>
<feature type="region of interest" description="Disordered" evidence="2">
    <location>
        <begin position="223"/>
        <end position="258"/>
    </location>
</feature>
<reference key="1">
    <citation type="submission" date="2009-01" db="EMBL/GenBank/DDBJ databases">
        <title>Complete sequence of Geobacter sp. FRC-32.</title>
        <authorList>
            <consortium name="US DOE Joint Genome Institute"/>
            <person name="Lucas S."/>
            <person name="Copeland A."/>
            <person name="Lapidus A."/>
            <person name="Glavina del Rio T."/>
            <person name="Dalin E."/>
            <person name="Tice H."/>
            <person name="Bruce D."/>
            <person name="Goodwin L."/>
            <person name="Pitluck S."/>
            <person name="Saunders E."/>
            <person name="Brettin T."/>
            <person name="Detter J.C."/>
            <person name="Han C."/>
            <person name="Larimer F."/>
            <person name="Land M."/>
            <person name="Hauser L."/>
            <person name="Kyrpides N."/>
            <person name="Ovchinnikova G."/>
            <person name="Kostka J."/>
            <person name="Richardson P."/>
        </authorList>
    </citation>
    <scope>NUCLEOTIDE SEQUENCE [LARGE SCALE GENOMIC DNA]</scope>
    <source>
        <strain>DSM 22248 / JCM 15807 / FRC-32</strain>
    </source>
</reference>
<proteinExistence type="inferred from homology"/>
<name>RL2_GEODF</name>
<sequence length="274" mass="30192">MAIKSYKPTSAGRRHQTCSTFEEITTSQPERSLVVKLKKTGGRNNFGRITSRHIGGGHKQKYRIIDFRRDKRDIPAKVASVEYDPYRSARIALLNYADGEKRYIIAPLDLKVGDTVVASTSADIKPGNALPIRSIPLGTIIHNIELKIGKGAQLARSAGTFAQLMAKEEKYAQVKLPSGEVRMVLMDCMATIGQVGNLDHENVSIGKAGRSRWLGKRPKVRGVAMNPVDHPHGGGEGRTSGGRHPVTPWGIPTKGYKTRTNKTSTRFIVKRRTK</sequence>
<comment type="function">
    <text evidence="1">One of the primary rRNA binding proteins. Required for association of the 30S and 50S subunits to form the 70S ribosome, for tRNA binding and peptide bond formation. It has been suggested to have peptidyltransferase activity; this is somewhat controversial. Makes several contacts with the 16S rRNA in the 70S ribosome.</text>
</comment>
<comment type="subunit">
    <text evidence="1">Part of the 50S ribosomal subunit. Forms a bridge to the 30S subunit in the 70S ribosome.</text>
</comment>
<comment type="similarity">
    <text evidence="1">Belongs to the universal ribosomal protein uL2 family.</text>
</comment>
<accession>B9M6U2</accession>
<evidence type="ECO:0000255" key="1">
    <source>
        <dbReference type="HAMAP-Rule" id="MF_01320"/>
    </source>
</evidence>
<evidence type="ECO:0000256" key="2">
    <source>
        <dbReference type="SAM" id="MobiDB-lite"/>
    </source>
</evidence>
<evidence type="ECO:0000305" key="3"/>
<dbReference type="EMBL" id="CP001390">
    <property type="protein sequence ID" value="ACM21963.1"/>
    <property type="molecule type" value="Genomic_DNA"/>
</dbReference>
<dbReference type="RefSeq" id="WP_012648690.1">
    <property type="nucleotide sequence ID" value="NC_011979.1"/>
</dbReference>
<dbReference type="SMR" id="B9M6U2"/>
<dbReference type="STRING" id="316067.Geob_3622"/>
<dbReference type="KEGG" id="geo:Geob_3622"/>
<dbReference type="eggNOG" id="COG0090">
    <property type="taxonomic scope" value="Bacteria"/>
</dbReference>
<dbReference type="HOGENOM" id="CLU_036235_2_1_7"/>
<dbReference type="OrthoDB" id="9778722at2"/>
<dbReference type="Proteomes" id="UP000007721">
    <property type="component" value="Chromosome"/>
</dbReference>
<dbReference type="GO" id="GO:0015934">
    <property type="term" value="C:large ribosomal subunit"/>
    <property type="evidence" value="ECO:0007669"/>
    <property type="project" value="InterPro"/>
</dbReference>
<dbReference type="GO" id="GO:0019843">
    <property type="term" value="F:rRNA binding"/>
    <property type="evidence" value="ECO:0007669"/>
    <property type="project" value="UniProtKB-UniRule"/>
</dbReference>
<dbReference type="GO" id="GO:0003735">
    <property type="term" value="F:structural constituent of ribosome"/>
    <property type="evidence" value="ECO:0007669"/>
    <property type="project" value="InterPro"/>
</dbReference>
<dbReference type="GO" id="GO:0016740">
    <property type="term" value="F:transferase activity"/>
    <property type="evidence" value="ECO:0007669"/>
    <property type="project" value="InterPro"/>
</dbReference>
<dbReference type="GO" id="GO:0002181">
    <property type="term" value="P:cytoplasmic translation"/>
    <property type="evidence" value="ECO:0007669"/>
    <property type="project" value="TreeGrafter"/>
</dbReference>
<dbReference type="FunFam" id="2.30.30.30:FF:000001">
    <property type="entry name" value="50S ribosomal protein L2"/>
    <property type="match status" value="1"/>
</dbReference>
<dbReference type="FunFam" id="2.40.50.140:FF:000003">
    <property type="entry name" value="50S ribosomal protein L2"/>
    <property type="match status" value="1"/>
</dbReference>
<dbReference type="FunFam" id="4.10.950.10:FF:000001">
    <property type="entry name" value="50S ribosomal protein L2"/>
    <property type="match status" value="1"/>
</dbReference>
<dbReference type="Gene3D" id="2.30.30.30">
    <property type="match status" value="1"/>
</dbReference>
<dbReference type="Gene3D" id="2.40.50.140">
    <property type="entry name" value="Nucleic acid-binding proteins"/>
    <property type="match status" value="1"/>
</dbReference>
<dbReference type="Gene3D" id="4.10.950.10">
    <property type="entry name" value="Ribosomal protein L2, domain 3"/>
    <property type="match status" value="1"/>
</dbReference>
<dbReference type="HAMAP" id="MF_01320_B">
    <property type="entry name" value="Ribosomal_uL2_B"/>
    <property type="match status" value="1"/>
</dbReference>
<dbReference type="InterPro" id="IPR012340">
    <property type="entry name" value="NA-bd_OB-fold"/>
</dbReference>
<dbReference type="InterPro" id="IPR014722">
    <property type="entry name" value="Rib_uL2_dom2"/>
</dbReference>
<dbReference type="InterPro" id="IPR002171">
    <property type="entry name" value="Ribosomal_uL2"/>
</dbReference>
<dbReference type="InterPro" id="IPR005880">
    <property type="entry name" value="Ribosomal_uL2_bac/org-type"/>
</dbReference>
<dbReference type="InterPro" id="IPR022669">
    <property type="entry name" value="Ribosomal_uL2_C"/>
</dbReference>
<dbReference type="InterPro" id="IPR022671">
    <property type="entry name" value="Ribosomal_uL2_CS"/>
</dbReference>
<dbReference type="InterPro" id="IPR014726">
    <property type="entry name" value="Ribosomal_uL2_dom3"/>
</dbReference>
<dbReference type="InterPro" id="IPR022666">
    <property type="entry name" value="Ribosomal_uL2_RNA-bd_dom"/>
</dbReference>
<dbReference type="InterPro" id="IPR008991">
    <property type="entry name" value="Translation_prot_SH3-like_sf"/>
</dbReference>
<dbReference type="NCBIfam" id="TIGR01171">
    <property type="entry name" value="rplB_bact"/>
    <property type="match status" value="1"/>
</dbReference>
<dbReference type="PANTHER" id="PTHR13691:SF5">
    <property type="entry name" value="LARGE RIBOSOMAL SUBUNIT PROTEIN UL2M"/>
    <property type="match status" value="1"/>
</dbReference>
<dbReference type="PANTHER" id="PTHR13691">
    <property type="entry name" value="RIBOSOMAL PROTEIN L2"/>
    <property type="match status" value="1"/>
</dbReference>
<dbReference type="Pfam" id="PF00181">
    <property type="entry name" value="Ribosomal_L2"/>
    <property type="match status" value="1"/>
</dbReference>
<dbReference type="Pfam" id="PF03947">
    <property type="entry name" value="Ribosomal_L2_C"/>
    <property type="match status" value="1"/>
</dbReference>
<dbReference type="PIRSF" id="PIRSF002158">
    <property type="entry name" value="Ribosomal_L2"/>
    <property type="match status" value="1"/>
</dbReference>
<dbReference type="SMART" id="SM01383">
    <property type="entry name" value="Ribosomal_L2"/>
    <property type="match status" value="1"/>
</dbReference>
<dbReference type="SMART" id="SM01382">
    <property type="entry name" value="Ribosomal_L2_C"/>
    <property type="match status" value="1"/>
</dbReference>
<dbReference type="SUPFAM" id="SSF50249">
    <property type="entry name" value="Nucleic acid-binding proteins"/>
    <property type="match status" value="1"/>
</dbReference>
<dbReference type="SUPFAM" id="SSF50104">
    <property type="entry name" value="Translation proteins SH3-like domain"/>
    <property type="match status" value="1"/>
</dbReference>
<dbReference type="PROSITE" id="PS00467">
    <property type="entry name" value="RIBOSOMAL_L2"/>
    <property type="match status" value="1"/>
</dbReference>
<keyword id="KW-1185">Reference proteome</keyword>
<keyword id="KW-0687">Ribonucleoprotein</keyword>
<keyword id="KW-0689">Ribosomal protein</keyword>
<keyword id="KW-0694">RNA-binding</keyword>
<keyword id="KW-0699">rRNA-binding</keyword>
<gene>
    <name evidence="1" type="primary">rplB</name>
    <name type="ordered locus">Geob_3622</name>
</gene>